<accession>Q9DC71</accession>
<accession>Q7TMG9</accession>
<accession>Q8C7F1</accession>
<accession>Q9CVE0</accession>
<accession>Q9CWX1</accession>
<comment type="subunit">
    <text evidence="1 5">Component of the mitochondrial ribosome small subunit (28S) which comprises a 12S rRNA and about 30 distinct proteins (By similarity). Interacts with METTL17 (PubMed:31487196).</text>
</comment>
<comment type="subcellular location">
    <subcellularLocation>
        <location evidence="2">Mitochondrion matrix</location>
    </subcellularLocation>
</comment>
<comment type="similarity">
    <text evidence="6">Belongs to the universal ribosomal protein uS15 family.</text>
</comment>
<dbReference type="EMBL" id="AB049947">
    <property type="protein sequence ID" value="BAB41000.1"/>
    <property type="molecule type" value="mRNA"/>
</dbReference>
<dbReference type="EMBL" id="AK003126">
    <property type="protein sequence ID" value="BAB22586.1"/>
    <property type="molecule type" value="mRNA"/>
</dbReference>
<dbReference type="EMBL" id="AK010330">
    <property type="protein sequence ID" value="BAB26857.1"/>
    <property type="molecule type" value="mRNA"/>
</dbReference>
<dbReference type="EMBL" id="AK008623">
    <property type="protein sequence ID" value="BAB25785.1"/>
    <property type="molecule type" value="mRNA"/>
</dbReference>
<dbReference type="EMBL" id="AK050396">
    <property type="protein sequence ID" value="BAC34235.1"/>
    <property type="molecule type" value="mRNA"/>
</dbReference>
<dbReference type="EMBL" id="BC029193">
    <property type="protein sequence ID" value="AAH29193.1"/>
    <property type="molecule type" value="mRNA"/>
</dbReference>
<dbReference type="EMBL" id="BC055861">
    <property type="protein sequence ID" value="AAH55861.1"/>
    <property type="molecule type" value="mRNA"/>
</dbReference>
<dbReference type="CCDS" id="CCDS18641.1"/>
<dbReference type="RefSeq" id="NP_079820.2">
    <property type="nucleotide sequence ID" value="NM_025544.2"/>
</dbReference>
<dbReference type="PDB" id="7PNT">
    <property type="method" value="EM"/>
    <property type="resolution" value="3.19 A"/>
    <property type="chains" value="L=1-258"/>
</dbReference>
<dbReference type="PDB" id="7PNU">
    <property type="method" value="EM"/>
    <property type="resolution" value="3.06 A"/>
    <property type="chains" value="L=1-258"/>
</dbReference>
<dbReference type="PDB" id="7PNV">
    <property type="method" value="EM"/>
    <property type="resolution" value="3.06 A"/>
    <property type="chains" value="L=1-258"/>
</dbReference>
<dbReference type="PDB" id="7PNW">
    <property type="method" value="EM"/>
    <property type="resolution" value="3.09 A"/>
    <property type="chains" value="L=1-258"/>
</dbReference>
<dbReference type="PDBsum" id="7PNT"/>
<dbReference type="PDBsum" id="7PNU"/>
<dbReference type="PDBsum" id="7PNV"/>
<dbReference type="PDBsum" id="7PNW"/>
<dbReference type="EMDB" id="EMD-13551"/>
<dbReference type="EMDB" id="EMD-13552"/>
<dbReference type="EMDB" id="EMD-13553"/>
<dbReference type="EMDB" id="EMD-13554"/>
<dbReference type="SMR" id="Q9DC71"/>
<dbReference type="BioGRID" id="211451">
    <property type="interactions" value="14"/>
</dbReference>
<dbReference type="ComplexPortal" id="CPX-5301">
    <property type="entry name" value="28S mitochondrial small ribosomal subunit"/>
</dbReference>
<dbReference type="FunCoup" id="Q9DC71">
    <property type="interactions" value="1276"/>
</dbReference>
<dbReference type="IntAct" id="Q9DC71">
    <property type="interactions" value="2"/>
</dbReference>
<dbReference type="MINT" id="Q9DC71"/>
<dbReference type="STRING" id="10090.ENSMUSP00000030675"/>
<dbReference type="GlyGen" id="Q9DC71">
    <property type="glycosylation" value="2 sites, 1 O-linked glycan (1 site)"/>
</dbReference>
<dbReference type="iPTMnet" id="Q9DC71"/>
<dbReference type="PhosphoSitePlus" id="Q9DC71"/>
<dbReference type="jPOST" id="Q9DC71"/>
<dbReference type="PaxDb" id="10090-ENSMUSP00000030675"/>
<dbReference type="PeptideAtlas" id="Q9DC71"/>
<dbReference type="ProteomicsDB" id="261001"/>
<dbReference type="Pumba" id="Q9DC71"/>
<dbReference type="Antibodypedia" id="31697">
    <property type="antibodies" value="187 antibodies from 26 providers"/>
</dbReference>
<dbReference type="Ensembl" id="ENSMUST00000030675.8">
    <property type="protein sequence ID" value="ENSMUSP00000030675.8"/>
    <property type="gene ID" value="ENSMUSG00000028861.14"/>
</dbReference>
<dbReference type="GeneID" id="66407"/>
<dbReference type="KEGG" id="mmu:66407"/>
<dbReference type="UCSC" id="uc008usf.1">
    <property type="organism name" value="mouse"/>
</dbReference>
<dbReference type="AGR" id="MGI:1913657"/>
<dbReference type="CTD" id="64960"/>
<dbReference type="MGI" id="MGI:1913657">
    <property type="gene designation" value="Mrps15"/>
</dbReference>
<dbReference type="VEuPathDB" id="HostDB:ENSMUSG00000028861"/>
<dbReference type="eggNOG" id="KOG2815">
    <property type="taxonomic scope" value="Eukaryota"/>
</dbReference>
<dbReference type="GeneTree" id="ENSGT00390000001737"/>
<dbReference type="HOGENOM" id="CLU_094627_0_0_1"/>
<dbReference type="InParanoid" id="Q9DC71"/>
<dbReference type="OMA" id="RYLQMSI"/>
<dbReference type="OrthoDB" id="441444at2759"/>
<dbReference type="PhylomeDB" id="Q9DC71"/>
<dbReference type="TreeFam" id="TF319038"/>
<dbReference type="Reactome" id="R-MMU-5389840">
    <property type="pathway name" value="Mitochondrial translation elongation"/>
</dbReference>
<dbReference type="Reactome" id="R-MMU-5419276">
    <property type="pathway name" value="Mitochondrial translation termination"/>
</dbReference>
<dbReference type="BioGRID-ORCS" id="66407">
    <property type="hits" value="25 hits in 78 CRISPR screens"/>
</dbReference>
<dbReference type="ChiTaRS" id="Mrps15">
    <property type="organism name" value="mouse"/>
</dbReference>
<dbReference type="PRO" id="PR:Q9DC71"/>
<dbReference type="Proteomes" id="UP000000589">
    <property type="component" value="Chromosome 4"/>
</dbReference>
<dbReference type="RNAct" id="Q9DC71">
    <property type="molecule type" value="protein"/>
</dbReference>
<dbReference type="Bgee" id="ENSMUSG00000028861">
    <property type="expression patterns" value="Expressed in facial nucleus and 264 other cell types or tissues"/>
</dbReference>
<dbReference type="GO" id="GO:0005743">
    <property type="term" value="C:mitochondrial inner membrane"/>
    <property type="evidence" value="ECO:0000303"/>
    <property type="project" value="ComplexPortal"/>
</dbReference>
<dbReference type="GO" id="GO:0005761">
    <property type="term" value="C:mitochondrial ribosome"/>
    <property type="evidence" value="ECO:0000314"/>
    <property type="project" value="MGI"/>
</dbReference>
<dbReference type="GO" id="GO:0005763">
    <property type="term" value="C:mitochondrial small ribosomal subunit"/>
    <property type="evidence" value="ECO:0000250"/>
    <property type="project" value="UniProtKB"/>
</dbReference>
<dbReference type="GO" id="GO:0005739">
    <property type="term" value="C:mitochondrion"/>
    <property type="evidence" value="ECO:0007005"/>
    <property type="project" value="MGI"/>
</dbReference>
<dbReference type="GO" id="GO:0005730">
    <property type="term" value="C:nucleolus"/>
    <property type="evidence" value="ECO:0007669"/>
    <property type="project" value="Ensembl"/>
</dbReference>
<dbReference type="GO" id="GO:0005654">
    <property type="term" value="C:nucleoplasm"/>
    <property type="evidence" value="ECO:0007669"/>
    <property type="project" value="Ensembl"/>
</dbReference>
<dbReference type="GO" id="GO:0003735">
    <property type="term" value="F:structural constituent of ribosome"/>
    <property type="evidence" value="ECO:0000250"/>
    <property type="project" value="UniProtKB"/>
</dbReference>
<dbReference type="GO" id="GO:0032543">
    <property type="term" value="P:mitochondrial translation"/>
    <property type="evidence" value="ECO:0000250"/>
    <property type="project" value="UniProtKB"/>
</dbReference>
<dbReference type="CDD" id="cd00353">
    <property type="entry name" value="Ribosomal_S15p_S13e"/>
    <property type="match status" value="1"/>
</dbReference>
<dbReference type="FunFam" id="1.10.287.10:FF:000015">
    <property type="entry name" value="Mitochondrial ribosomal protein S15"/>
    <property type="match status" value="1"/>
</dbReference>
<dbReference type="Gene3D" id="1.10.287.10">
    <property type="entry name" value="S15/NS1, RNA-binding"/>
    <property type="match status" value="1"/>
</dbReference>
<dbReference type="HAMAP" id="MF_01343_B">
    <property type="entry name" value="Ribosomal_uS15_B"/>
    <property type="match status" value="1"/>
</dbReference>
<dbReference type="InterPro" id="IPR000589">
    <property type="entry name" value="Ribosomal_uS15"/>
</dbReference>
<dbReference type="InterPro" id="IPR005290">
    <property type="entry name" value="Ribosomal_uS15_bac-type"/>
</dbReference>
<dbReference type="InterPro" id="IPR009068">
    <property type="entry name" value="uS15_NS1_RNA-bd_sf"/>
</dbReference>
<dbReference type="InterPro" id="IPR052137">
    <property type="entry name" value="uS15_ribosomal"/>
</dbReference>
<dbReference type="PANTHER" id="PTHR46685">
    <property type="entry name" value="28S RIBOSOMAL PROTEIN S15, MITOCHONDRIAL"/>
    <property type="match status" value="1"/>
</dbReference>
<dbReference type="PANTHER" id="PTHR46685:SF1">
    <property type="entry name" value="SMALL RIBOSOMAL SUBUNIT PROTEIN US15M"/>
    <property type="match status" value="1"/>
</dbReference>
<dbReference type="Pfam" id="PF00312">
    <property type="entry name" value="Ribosomal_S15"/>
    <property type="match status" value="1"/>
</dbReference>
<dbReference type="SMART" id="SM01387">
    <property type="entry name" value="Ribosomal_S15"/>
    <property type="match status" value="1"/>
</dbReference>
<dbReference type="SUPFAM" id="SSF47060">
    <property type="entry name" value="S15/NS1 RNA-binding domain"/>
    <property type="match status" value="1"/>
</dbReference>
<sequence length="258" mass="29464">MLRAAWRALSSVRAQAVTRAPVPALRGGSSASLLSARCGLQPPSLLRAARAYAAVQKPVQPKQDDEPPSSAFIKEYKDIIPNIEKVDDVVKRILSLEMASRKEKLKIKQEQLMNKIVENPEDSRTLEAQIIALTVRIRNYEEHMQKHRKDKAHKRHLLMSIDRRKKLLKILRQTNYDVFEKTCKELGVEYTLPPLHFQKVHRRFLAKKALCIRVYQEVQKLKKQKRALKAAAAAAKKEKNEGVPENPSNAVPEKTQVN</sequence>
<name>RT15_MOUSE</name>
<reference key="1">
    <citation type="journal article" date="2001" name="J. Biol. Chem.">
        <title>Proteomic analysis of the mammalian mitochondrial ribosome. Identification of protein components in the 28S small subunit.</title>
        <authorList>
            <person name="Suzuki T."/>
            <person name="Terasaki M."/>
            <person name="Takemoto-Hori C."/>
            <person name="Hanada T."/>
            <person name="Ueda T."/>
            <person name="Wada A."/>
            <person name="Watanabe K."/>
        </authorList>
    </citation>
    <scope>NUCLEOTIDE SEQUENCE [MRNA]</scope>
</reference>
<reference key="2">
    <citation type="journal article" date="2005" name="Science">
        <title>The transcriptional landscape of the mammalian genome.</title>
        <authorList>
            <person name="Carninci P."/>
            <person name="Kasukawa T."/>
            <person name="Katayama S."/>
            <person name="Gough J."/>
            <person name="Frith M.C."/>
            <person name="Maeda N."/>
            <person name="Oyama R."/>
            <person name="Ravasi T."/>
            <person name="Lenhard B."/>
            <person name="Wells C."/>
            <person name="Kodzius R."/>
            <person name="Shimokawa K."/>
            <person name="Bajic V.B."/>
            <person name="Brenner S.E."/>
            <person name="Batalov S."/>
            <person name="Forrest A.R."/>
            <person name="Zavolan M."/>
            <person name="Davis M.J."/>
            <person name="Wilming L.G."/>
            <person name="Aidinis V."/>
            <person name="Allen J.E."/>
            <person name="Ambesi-Impiombato A."/>
            <person name="Apweiler R."/>
            <person name="Aturaliya R.N."/>
            <person name="Bailey T.L."/>
            <person name="Bansal M."/>
            <person name="Baxter L."/>
            <person name="Beisel K.W."/>
            <person name="Bersano T."/>
            <person name="Bono H."/>
            <person name="Chalk A.M."/>
            <person name="Chiu K.P."/>
            <person name="Choudhary V."/>
            <person name="Christoffels A."/>
            <person name="Clutterbuck D.R."/>
            <person name="Crowe M.L."/>
            <person name="Dalla E."/>
            <person name="Dalrymple B.P."/>
            <person name="de Bono B."/>
            <person name="Della Gatta G."/>
            <person name="di Bernardo D."/>
            <person name="Down T."/>
            <person name="Engstrom P."/>
            <person name="Fagiolini M."/>
            <person name="Faulkner G."/>
            <person name="Fletcher C.F."/>
            <person name="Fukushima T."/>
            <person name="Furuno M."/>
            <person name="Futaki S."/>
            <person name="Gariboldi M."/>
            <person name="Georgii-Hemming P."/>
            <person name="Gingeras T.R."/>
            <person name="Gojobori T."/>
            <person name="Green R.E."/>
            <person name="Gustincich S."/>
            <person name="Harbers M."/>
            <person name="Hayashi Y."/>
            <person name="Hensch T.K."/>
            <person name="Hirokawa N."/>
            <person name="Hill D."/>
            <person name="Huminiecki L."/>
            <person name="Iacono M."/>
            <person name="Ikeo K."/>
            <person name="Iwama A."/>
            <person name="Ishikawa T."/>
            <person name="Jakt M."/>
            <person name="Kanapin A."/>
            <person name="Katoh M."/>
            <person name="Kawasawa Y."/>
            <person name="Kelso J."/>
            <person name="Kitamura H."/>
            <person name="Kitano H."/>
            <person name="Kollias G."/>
            <person name="Krishnan S.P."/>
            <person name="Kruger A."/>
            <person name="Kummerfeld S.K."/>
            <person name="Kurochkin I.V."/>
            <person name="Lareau L.F."/>
            <person name="Lazarevic D."/>
            <person name="Lipovich L."/>
            <person name="Liu J."/>
            <person name="Liuni S."/>
            <person name="McWilliam S."/>
            <person name="Madan Babu M."/>
            <person name="Madera M."/>
            <person name="Marchionni L."/>
            <person name="Matsuda H."/>
            <person name="Matsuzawa S."/>
            <person name="Miki H."/>
            <person name="Mignone F."/>
            <person name="Miyake S."/>
            <person name="Morris K."/>
            <person name="Mottagui-Tabar S."/>
            <person name="Mulder N."/>
            <person name="Nakano N."/>
            <person name="Nakauchi H."/>
            <person name="Ng P."/>
            <person name="Nilsson R."/>
            <person name="Nishiguchi S."/>
            <person name="Nishikawa S."/>
            <person name="Nori F."/>
            <person name="Ohara O."/>
            <person name="Okazaki Y."/>
            <person name="Orlando V."/>
            <person name="Pang K.C."/>
            <person name="Pavan W.J."/>
            <person name="Pavesi G."/>
            <person name="Pesole G."/>
            <person name="Petrovsky N."/>
            <person name="Piazza S."/>
            <person name="Reed J."/>
            <person name="Reid J.F."/>
            <person name="Ring B.Z."/>
            <person name="Ringwald M."/>
            <person name="Rost B."/>
            <person name="Ruan Y."/>
            <person name="Salzberg S.L."/>
            <person name="Sandelin A."/>
            <person name="Schneider C."/>
            <person name="Schoenbach C."/>
            <person name="Sekiguchi K."/>
            <person name="Semple C.A."/>
            <person name="Seno S."/>
            <person name="Sessa L."/>
            <person name="Sheng Y."/>
            <person name="Shibata Y."/>
            <person name="Shimada H."/>
            <person name="Shimada K."/>
            <person name="Silva D."/>
            <person name="Sinclair B."/>
            <person name="Sperling S."/>
            <person name="Stupka E."/>
            <person name="Sugiura K."/>
            <person name="Sultana R."/>
            <person name="Takenaka Y."/>
            <person name="Taki K."/>
            <person name="Tammoja K."/>
            <person name="Tan S.L."/>
            <person name="Tang S."/>
            <person name="Taylor M.S."/>
            <person name="Tegner J."/>
            <person name="Teichmann S.A."/>
            <person name="Ueda H.R."/>
            <person name="van Nimwegen E."/>
            <person name="Verardo R."/>
            <person name="Wei C.L."/>
            <person name="Yagi K."/>
            <person name="Yamanishi H."/>
            <person name="Zabarovsky E."/>
            <person name="Zhu S."/>
            <person name="Zimmer A."/>
            <person name="Hide W."/>
            <person name="Bult C."/>
            <person name="Grimmond S.M."/>
            <person name="Teasdale R.D."/>
            <person name="Liu E.T."/>
            <person name="Brusic V."/>
            <person name="Quackenbush J."/>
            <person name="Wahlestedt C."/>
            <person name="Mattick J.S."/>
            <person name="Hume D.A."/>
            <person name="Kai C."/>
            <person name="Sasaki D."/>
            <person name="Tomaru Y."/>
            <person name="Fukuda S."/>
            <person name="Kanamori-Katayama M."/>
            <person name="Suzuki M."/>
            <person name="Aoki J."/>
            <person name="Arakawa T."/>
            <person name="Iida J."/>
            <person name="Imamura K."/>
            <person name="Itoh M."/>
            <person name="Kato T."/>
            <person name="Kawaji H."/>
            <person name="Kawagashira N."/>
            <person name="Kawashima T."/>
            <person name="Kojima M."/>
            <person name="Kondo S."/>
            <person name="Konno H."/>
            <person name="Nakano K."/>
            <person name="Ninomiya N."/>
            <person name="Nishio T."/>
            <person name="Okada M."/>
            <person name="Plessy C."/>
            <person name="Shibata K."/>
            <person name="Shiraki T."/>
            <person name="Suzuki S."/>
            <person name="Tagami M."/>
            <person name="Waki K."/>
            <person name="Watahiki A."/>
            <person name="Okamura-Oho Y."/>
            <person name="Suzuki H."/>
            <person name="Kawai J."/>
            <person name="Hayashizaki Y."/>
        </authorList>
    </citation>
    <scope>NUCLEOTIDE SEQUENCE [LARGE SCALE MRNA]</scope>
    <source>
        <strain>C57BL/6J</strain>
        <tissue>Embryonic stem cell</tissue>
        <tissue>Heart</tissue>
        <tissue>Liver</tissue>
        <tissue>Stomach</tissue>
    </source>
</reference>
<reference key="3">
    <citation type="journal article" date="2004" name="Genome Res.">
        <title>The status, quality, and expansion of the NIH full-length cDNA project: the Mammalian Gene Collection (MGC).</title>
        <authorList>
            <consortium name="The MGC Project Team"/>
        </authorList>
    </citation>
    <scope>NUCLEOTIDE SEQUENCE [LARGE SCALE MRNA]</scope>
    <source>
        <strain>Czech II</strain>
        <strain>FVB/N</strain>
        <tissue>Mammary tumor</tissue>
    </source>
</reference>
<reference key="4">
    <citation type="journal article" date="2010" name="Cell">
        <title>A tissue-specific atlas of mouse protein phosphorylation and expression.</title>
        <authorList>
            <person name="Huttlin E.L."/>
            <person name="Jedrychowski M.P."/>
            <person name="Elias J.E."/>
            <person name="Goswami T."/>
            <person name="Rad R."/>
            <person name="Beausoleil S.A."/>
            <person name="Villen J."/>
            <person name="Haas W."/>
            <person name="Sowa M.E."/>
            <person name="Gygi S.P."/>
        </authorList>
    </citation>
    <scope>IDENTIFICATION BY MASS SPECTROMETRY [LARGE SCALE ANALYSIS]</scope>
    <source>
        <tissue>Brown adipose tissue</tissue>
        <tissue>Heart</tissue>
        <tissue>Kidney</tissue>
        <tissue>Liver</tissue>
    </source>
</reference>
<reference key="5">
    <citation type="journal article" date="2019" name="FASEB J.">
        <title>Mettl17, a regulator of mitochondrial ribosomal RNA modifications, is required for the translation of mitochondrial coding genes.</title>
        <authorList>
            <person name="Shi Z."/>
            <person name="Xu S."/>
            <person name="Xing S."/>
            <person name="Yao K."/>
            <person name="Zhang L."/>
            <person name="Xue L."/>
            <person name="Zhou P."/>
            <person name="Wang M."/>
            <person name="Yan G."/>
            <person name="Yang P."/>
            <person name="Liu J."/>
            <person name="Hu Z."/>
            <person name="Lan F."/>
        </authorList>
    </citation>
    <scope>INTERACTION WITH METTL17</scope>
</reference>
<evidence type="ECO:0000250" key="1">
    <source>
        <dbReference type="UniProtKB" id="P82913"/>
    </source>
</evidence>
<evidence type="ECO:0000250" key="2">
    <source>
        <dbReference type="UniProtKB" id="P82914"/>
    </source>
</evidence>
<evidence type="ECO:0000255" key="3"/>
<evidence type="ECO:0000256" key="4">
    <source>
        <dbReference type="SAM" id="MobiDB-lite"/>
    </source>
</evidence>
<evidence type="ECO:0000269" key="5">
    <source>
    </source>
</evidence>
<evidence type="ECO:0000305" key="6"/>
<protein>
    <recommendedName>
        <fullName evidence="6">Small ribosomal subunit protein uS15m</fullName>
    </recommendedName>
    <alternativeName>
        <fullName>28S ribosomal protein S15, mitochondrial</fullName>
        <shortName>MRP-S15</shortName>
        <shortName>S15mt</shortName>
    </alternativeName>
</protein>
<feature type="transit peptide" description="Mitochondrion" evidence="3">
    <location>
        <begin position="1"/>
        <end position="57"/>
    </location>
</feature>
<feature type="chain" id="PRO_0000030615" description="Small ribosomal subunit protein uS15m">
    <location>
        <begin position="58"/>
        <end position="258"/>
    </location>
</feature>
<feature type="region of interest" description="Disordered" evidence="4">
    <location>
        <begin position="229"/>
        <end position="258"/>
    </location>
</feature>
<feature type="sequence conflict" description="In Ref. 2; BAC34235." evidence="6" ref="2">
    <original>N</original>
    <variation>D</variation>
    <location>
        <position position="139"/>
    </location>
</feature>
<feature type="sequence conflict" description="In Ref. 2; BAB26857." evidence="6" ref="2">
    <original>E</original>
    <variation>G</variation>
    <location>
        <position position="180"/>
    </location>
</feature>
<feature type="sequence conflict" description="In Ref. 1; BAB41000 and 2; BAB22586." evidence="6" ref="1 2">
    <original>E</original>
    <variation>G</variation>
    <location>
        <position position="241"/>
    </location>
</feature>
<feature type="sequence conflict" description="In Ref. 3; AAH55861." evidence="6" ref="3">
    <original>V</original>
    <variation>L</variation>
    <location>
        <position position="251"/>
    </location>
</feature>
<feature type="sequence conflict" description="In Ref. 2; BAB26857." evidence="6" ref="2">
    <original>V</original>
    <variation>M</variation>
    <location>
        <position position="257"/>
    </location>
</feature>
<proteinExistence type="evidence at protein level"/>
<organism>
    <name type="scientific">Mus musculus</name>
    <name type="common">Mouse</name>
    <dbReference type="NCBI Taxonomy" id="10090"/>
    <lineage>
        <taxon>Eukaryota</taxon>
        <taxon>Metazoa</taxon>
        <taxon>Chordata</taxon>
        <taxon>Craniata</taxon>
        <taxon>Vertebrata</taxon>
        <taxon>Euteleostomi</taxon>
        <taxon>Mammalia</taxon>
        <taxon>Eutheria</taxon>
        <taxon>Euarchontoglires</taxon>
        <taxon>Glires</taxon>
        <taxon>Rodentia</taxon>
        <taxon>Myomorpha</taxon>
        <taxon>Muroidea</taxon>
        <taxon>Muridae</taxon>
        <taxon>Murinae</taxon>
        <taxon>Mus</taxon>
        <taxon>Mus</taxon>
    </lineage>
</organism>
<keyword id="KW-0002">3D-structure</keyword>
<keyword id="KW-0496">Mitochondrion</keyword>
<keyword id="KW-1185">Reference proteome</keyword>
<keyword id="KW-0687">Ribonucleoprotein</keyword>
<keyword id="KW-0689">Ribosomal protein</keyword>
<keyword id="KW-0809">Transit peptide</keyword>
<gene>
    <name type="primary">Mrps15</name>
    <name type="synonym">Rpms15</name>
</gene>